<proteinExistence type="inferred from homology"/>
<name>EFP_BACP2</name>
<comment type="function">
    <text evidence="1">Involved in peptide bond synthesis. Stimulates efficient translation and peptide-bond synthesis on native or reconstituted 70S ribosomes in vitro. Probably functions indirectly by altering the affinity of the ribosome for aminoacyl-tRNA, thus increasing their reactivity as acceptors for peptidyl transferase.</text>
</comment>
<comment type="pathway">
    <text evidence="1">Protein biosynthesis; polypeptide chain elongation.</text>
</comment>
<comment type="subcellular location">
    <subcellularLocation>
        <location evidence="1">Cytoplasm</location>
    </subcellularLocation>
</comment>
<comment type="similarity">
    <text evidence="1">Belongs to the elongation factor P family.</text>
</comment>
<sequence length="185" mass="20412">MISVNDFRTGLTIEVDGGIWRVVDFQHVKPGKGAAFVRSKLRNLRTGAIQEKTFRAGEKVAKAQIETKTMQYLYANGDQHVFMDTSSYEQLELSETQIKDELKYLLENMSVQIVMYGAETLGVELPNTVELEVVETEPGIKGDTTSGGSKPAKTETGLIVNVPFFVNQGDKLVINTSDGSYVSRA</sequence>
<protein>
    <recommendedName>
        <fullName evidence="1">Elongation factor P</fullName>
        <shortName evidence="1">EF-P</shortName>
    </recommendedName>
</protein>
<organism>
    <name type="scientific">Bacillus pumilus (strain SAFR-032)</name>
    <dbReference type="NCBI Taxonomy" id="315750"/>
    <lineage>
        <taxon>Bacteria</taxon>
        <taxon>Bacillati</taxon>
        <taxon>Bacillota</taxon>
        <taxon>Bacilli</taxon>
        <taxon>Bacillales</taxon>
        <taxon>Bacillaceae</taxon>
        <taxon>Bacillus</taxon>
    </lineage>
</organism>
<feature type="chain" id="PRO_1000057920" description="Elongation factor P">
    <location>
        <begin position="1"/>
        <end position="185"/>
    </location>
</feature>
<reference key="1">
    <citation type="journal article" date="2007" name="PLoS ONE">
        <title>Paradoxical DNA repair and peroxide resistance gene conservation in Bacillus pumilus SAFR-032.</title>
        <authorList>
            <person name="Gioia J."/>
            <person name="Yerrapragada S."/>
            <person name="Qin X."/>
            <person name="Jiang H."/>
            <person name="Igboeli O.C."/>
            <person name="Muzny D."/>
            <person name="Dugan-Rocha S."/>
            <person name="Ding Y."/>
            <person name="Hawes A."/>
            <person name="Liu W."/>
            <person name="Perez L."/>
            <person name="Kovar C."/>
            <person name="Dinh H."/>
            <person name="Lee S."/>
            <person name="Nazareth L."/>
            <person name="Blyth P."/>
            <person name="Holder M."/>
            <person name="Buhay C."/>
            <person name="Tirumalai M.R."/>
            <person name="Liu Y."/>
            <person name="Dasgupta I."/>
            <person name="Bokhetache L."/>
            <person name="Fujita M."/>
            <person name="Karouia F."/>
            <person name="Eswara Moorthy P."/>
            <person name="Siefert J."/>
            <person name="Uzman A."/>
            <person name="Buzumbo P."/>
            <person name="Verma A."/>
            <person name="Zwiya H."/>
            <person name="McWilliams B.D."/>
            <person name="Olowu A."/>
            <person name="Clinkenbeard K.D."/>
            <person name="Newcombe D."/>
            <person name="Golebiewski L."/>
            <person name="Petrosino J.F."/>
            <person name="Nicholson W.L."/>
            <person name="Fox G.E."/>
            <person name="Venkateswaran K."/>
            <person name="Highlander S.K."/>
            <person name="Weinstock G.M."/>
        </authorList>
    </citation>
    <scope>NUCLEOTIDE SEQUENCE [LARGE SCALE GENOMIC DNA]</scope>
    <source>
        <strain>SAFR-032</strain>
    </source>
</reference>
<accession>A8FF29</accession>
<evidence type="ECO:0000255" key="1">
    <source>
        <dbReference type="HAMAP-Rule" id="MF_00141"/>
    </source>
</evidence>
<keyword id="KW-0963">Cytoplasm</keyword>
<keyword id="KW-0251">Elongation factor</keyword>
<keyword id="KW-0648">Protein biosynthesis</keyword>
<dbReference type="EMBL" id="CP000813">
    <property type="protein sequence ID" value="ABV62846.1"/>
    <property type="molecule type" value="Genomic_DNA"/>
</dbReference>
<dbReference type="RefSeq" id="WP_012010541.1">
    <property type="nucleotide sequence ID" value="NZ_VEIS01000005.1"/>
</dbReference>
<dbReference type="SMR" id="A8FF29"/>
<dbReference type="STRING" id="315750.BPUM_2177"/>
<dbReference type="GeneID" id="5621443"/>
<dbReference type="KEGG" id="bpu:BPUM_2177"/>
<dbReference type="eggNOG" id="COG0231">
    <property type="taxonomic scope" value="Bacteria"/>
</dbReference>
<dbReference type="HOGENOM" id="CLU_074944_0_1_9"/>
<dbReference type="OrthoDB" id="9801844at2"/>
<dbReference type="UniPathway" id="UPA00345"/>
<dbReference type="Proteomes" id="UP000001355">
    <property type="component" value="Chromosome"/>
</dbReference>
<dbReference type="GO" id="GO:0005737">
    <property type="term" value="C:cytoplasm"/>
    <property type="evidence" value="ECO:0007669"/>
    <property type="project" value="UniProtKB-SubCell"/>
</dbReference>
<dbReference type="GO" id="GO:0003746">
    <property type="term" value="F:translation elongation factor activity"/>
    <property type="evidence" value="ECO:0007669"/>
    <property type="project" value="UniProtKB-UniRule"/>
</dbReference>
<dbReference type="GO" id="GO:0043043">
    <property type="term" value="P:peptide biosynthetic process"/>
    <property type="evidence" value="ECO:0007669"/>
    <property type="project" value="InterPro"/>
</dbReference>
<dbReference type="CDD" id="cd04470">
    <property type="entry name" value="S1_EF-P_repeat_1"/>
    <property type="match status" value="1"/>
</dbReference>
<dbReference type="CDD" id="cd05794">
    <property type="entry name" value="S1_EF-P_repeat_2"/>
    <property type="match status" value="1"/>
</dbReference>
<dbReference type="FunFam" id="2.30.30.30:FF:000010">
    <property type="entry name" value="Elongation factor P"/>
    <property type="match status" value="1"/>
</dbReference>
<dbReference type="FunFam" id="2.40.50.140:FF:000004">
    <property type="entry name" value="Elongation factor P"/>
    <property type="match status" value="1"/>
</dbReference>
<dbReference type="FunFam" id="2.40.50.140:FF:000009">
    <property type="entry name" value="Elongation factor P"/>
    <property type="match status" value="1"/>
</dbReference>
<dbReference type="Gene3D" id="2.30.30.30">
    <property type="match status" value="1"/>
</dbReference>
<dbReference type="Gene3D" id="2.40.50.140">
    <property type="entry name" value="Nucleic acid-binding proteins"/>
    <property type="match status" value="2"/>
</dbReference>
<dbReference type="HAMAP" id="MF_00141">
    <property type="entry name" value="EF_P"/>
    <property type="match status" value="1"/>
</dbReference>
<dbReference type="InterPro" id="IPR015365">
    <property type="entry name" value="Elong-fact-P_C"/>
</dbReference>
<dbReference type="InterPro" id="IPR012340">
    <property type="entry name" value="NA-bd_OB-fold"/>
</dbReference>
<dbReference type="InterPro" id="IPR014722">
    <property type="entry name" value="Rib_uL2_dom2"/>
</dbReference>
<dbReference type="InterPro" id="IPR020599">
    <property type="entry name" value="Transl_elong_fac_P/YeiP"/>
</dbReference>
<dbReference type="InterPro" id="IPR013185">
    <property type="entry name" value="Transl_elong_KOW-like"/>
</dbReference>
<dbReference type="InterPro" id="IPR001059">
    <property type="entry name" value="Transl_elong_P/YeiP_cen"/>
</dbReference>
<dbReference type="InterPro" id="IPR013852">
    <property type="entry name" value="Transl_elong_P/YeiP_CS"/>
</dbReference>
<dbReference type="InterPro" id="IPR011768">
    <property type="entry name" value="Transl_elongation_fac_P"/>
</dbReference>
<dbReference type="InterPro" id="IPR008991">
    <property type="entry name" value="Translation_prot_SH3-like_sf"/>
</dbReference>
<dbReference type="NCBIfam" id="TIGR00038">
    <property type="entry name" value="efp"/>
    <property type="match status" value="1"/>
</dbReference>
<dbReference type="NCBIfam" id="NF001810">
    <property type="entry name" value="PRK00529.1"/>
    <property type="match status" value="1"/>
</dbReference>
<dbReference type="PANTHER" id="PTHR30053">
    <property type="entry name" value="ELONGATION FACTOR P"/>
    <property type="match status" value="1"/>
</dbReference>
<dbReference type="PANTHER" id="PTHR30053:SF12">
    <property type="entry name" value="ELONGATION FACTOR P (EF-P) FAMILY PROTEIN"/>
    <property type="match status" value="1"/>
</dbReference>
<dbReference type="Pfam" id="PF01132">
    <property type="entry name" value="EFP"/>
    <property type="match status" value="1"/>
</dbReference>
<dbReference type="Pfam" id="PF08207">
    <property type="entry name" value="EFP_N"/>
    <property type="match status" value="1"/>
</dbReference>
<dbReference type="Pfam" id="PF09285">
    <property type="entry name" value="Elong-fact-P_C"/>
    <property type="match status" value="1"/>
</dbReference>
<dbReference type="PIRSF" id="PIRSF005901">
    <property type="entry name" value="EF-P"/>
    <property type="match status" value="1"/>
</dbReference>
<dbReference type="SMART" id="SM01185">
    <property type="entry name" value="EFP"/>
    <property type="match status" value="1"/>
</dbReference>
<dbReference type="SMART" id="SM00841">
    <property type="entry name" value="Elong-fact-P_C"/>
    <property type="match status" value="1"/>
</dbReference>
<dbReference type="SUPFAM" id="SSF50249">
    <property type="entry name" value="Nucleic acid-binding proteins"/>
    <property type="match status" value="2"/>
</dbReference>
<dbReference type="SUPFAM" id="SSF50104">
    <property type="entry name" value="Translation proteins SH3-like domain"/>
    <property type="match status" value="1"/>
</dbReference>
<dbReference type="PROSITE" id="PS01275">
    <property type="entry name" value="EFP"/>
    <property type="match status" value="1"/>
</dbReference>
<gene>
    <name evidence="1" type="primary">efp</name>
    <name type="ordered locus">BPUM_2177</name>
</gene>